<feature type="chain" id="PRO_0000154879" description="Probable tRNA sulfurtransferase">
    <location>
        <begin position="1"/>
        <end position="404"/>
    </location>
</feature>
<feature type="domain" description="THUMP" evidence="1">
    <location>
        <begin position="60"/>
        <end position="165"/>
    </location>
</feature>
<feature type="binding site" evidence="1">
    <location>
        <begin position="183"/>
        <end position="184"/>
    </location>
    <ligand>
        <name>ATP</name>
        <dbReference type="ChEBI" id="CHEBI:30616"/>
    </ligand>
</feature>
<feature type="binding site" evidence="1">
    <location>
        <begin position="208"/>
        <end position="209"/>
    </location>
    <ligand>
        <name>ATP</name>
        <dbReference type="ChEBI" id="CHEBI:30616"/>
    </ligand>
</feature>
<feature type="binding site" evidence="1">
    <location>
        <position position="265"/>
    </location>
    <ligand>
        <name>ATP</name>
        <dbReference type="ChEBI" id="CHEBI:30616"/>
    </ligand>
</feature>
<feature type="binding site" evidence="1">
    <location>
        <position position="287"/>
    </location>
    <ligand>
        <name>ATP</name>
        <dbReference type="ChEBI" id="CHEBI:30616"/>
    </ligand>
</feature>
<feature type="binding site" evidence="1">
    <location>
        <position position="296"/>
    </location>
    <ligand>
        <name>ATP</name>
        <dbReference type="ChEBI" id="CHEBI:30616"/>
    </ligand>
</feature>
<comment type="function">
    <text evidence="1">Catalyzes the ATP-dependent transfer of a sulfur to tRNA to produce 4-thiouridine in position 8 of tRNAs, which functions as a near-UV photosensor. Also catalyzes the transfer of sulfur to the sulfur carrier protein ThiS, forming ThiS-thiocarboxylate. This is a step in the synthesis of thiazole, in the thiamine biosynthesis pathway. The sulfur is donated as persulfide by IscS.</text>
</comment>
<comment type="catalytic activity">
    <reaction evidence="1">
        <text>[ThiI sulfur-carrier protein]-S-sulfanyl-L-cysteine + a uridine in tRNA + 2 reduced [2Fe-2S]-[ferredoxin] + ATP + H(+) = [ThiI sulfur-carrier protein]-L-cysteine + a 4-thiouridine in tRNA + 2 oxidized [2Fe-2S]-[ferredoxin] + AMP + diphosphate</text>
        <dbReference type="Rhea" id="RHEA:24176"/>
        <dbReference type="Rhea" id="RHEA-COMP:10000"/>
        <dbReference type="Rhea" id="RHEA-COMP:10001"/>
        <dbReference type="Rhea" id="RHEA-COMP:13337"/>
        <dbReference type="Rhea" id="RHEA-COMP:13338"/>
        <dbReference type="Rhea" id="RHEA-COMP:13339"/>
        <dbReference type="Rhea" id="RHEA-COMP:13340"/>
        <dbReference type="ChEBI" id="CHEBI:15378"/>
        <dbReference type="ChEBI" id="CHEBI:29950"/>
        <dbReference type="ChEBI" id="CHEBI:30616"/>
        <dbReference type="ChEBI" id="CHEBI:33019"/>
        <dbReference type="ChEBI" id="CHEBI:33737"/>
        <dbReference type="ChEBI" id="CHEBI:33738"/>
        <dbReference type="ChEBI" id="CHEBI:61963"/>
        <dbReference type="ChEBI" id="CHEBI:65315"/>
        <dbReference type="ChEBI" id="CHEBI:136798"/>
        <dbReference type="ChEBI" id="CHEBI:456215"/>
        <dbReference type="EC" id="2.8.1.4"/>
    </reaction>
</comment>
<comment type="catalytic activity">
    <reaction evidence="1">
        <text>[ThiS sulfur-carrier protein]-C-terminal Gly-Gly-AMP + S-sulfanyl-L-cysteinyl-[cysteine desulfurase] + AH2 = [ThiS sulfur-carrier protein]-C-terminal-Gly-aminoethanethioate + L-cysteinyl-[cysteine desulfurase] + A + AMP + 2 H(+)</text>
        <dbReference type="Rhea" id="RHEA:43340"/>
        <dbReference type="Rhea" id="RHEA-COMP:12157"/>
        <dbReference type="Rhea" id="RHEA-COMP:12158"/>
        <dbReference type="Rhea" id="RHEA-COMP:12910"/>
        <dbReference type="Rhea" id="RHEA-COMP:19908"/>
        <dbReference type="ChEBI" id="CHEBI:13193"/>
        <dbReference type="ChEBI" id="CHEBI:15378"/>
        <dbReference type="ChEBI" id="CHEBI:17499"/>
        <dbReference type="ChEBI" id="CHEBI:29950"/>
        <dbReference type="ChEBI" id="CHEBI:61963"/>
        <dbReference type="ChEBI" id="CHEBI:90618"/>
        <dbReference type="ChEBI" id="CHEBI:232372"/>
        <dbReference type="ChEBI" id="CHEBI:456215"/>
    </reaction>
</comment>
<comment type="pathway">
    <text evidence="1">Cofactor biosynthesis; thiamine diphosphate biosynthesis.</text>
</comment>
<comment type="subcellular location">
    <subcellularLocation>
        <location evidence="1">Cytoplasm</location>
    </subcellularLocation>
</comment>
<comment type="similarity">
    <text evidence="1">Belongs to the ThiI family.</text>
</comment>
<sequence length="404" mass="44846">MDYSEIMVRHGELSTKGKNRMRFINKLKNNIQDVLAPFPAITVRSDRDRTHVYLNGTDYQPVVEALKLVFGVQALSPVYKLEKSVPLLVTAVQDIMTSLYRDGLTFKIATKRSDHAFELDSRELNSLLGGAVFEVLPNIQAQMKHPDVTLKVEIRDEAAYISYEEIKGAGGLPVGTSGKGMLMLSGGIDSPVAGYLALKRGLDIEVVHFASPPYTSPGALAKAQDLTRRLTRFGGNIQFIEVPFTEIQEEIKNKAPEAYLMTLTRRFMMRITDAIREQRKGLVIVNGESLGQVASQTLESMQAINAVTSTPIIRPVVTMDKLEIIEMAQAIDTFDISIQPFEDCCTIFAPDRPKTNPKLGNAEKYEERFDIDGLVQRAVSGIVVTEITPEIVNDEVENLIDALL</sequence>
<evidence type="ECO:0000255" key="1">
    <source>
        <dbReference type="HAMAP-Rule" id="MF_00021"/>
    </source>
</evidence>
<organism>
    <name type="scientific">Streptococcus pyogenes serotype M18 (strain MGAS8232)</name>
    <dbReference type="NCBI Taxonomy" id="186103"/>
    <lineage>
        <taxon>Bacteria</taxon>
        <taxon>Bacillati</taxon>
        <taxon>Bacillota</taxon>
        <taxon>Bacilli</taxon>
        <taxon>Lactobacillales</taxon>
        <taxon>Streptococcaceae</taxon>
        <taxon>Streptococcus</taxon>
    </lineage>
</organism>
<proteinExistence type="inferred from homology"/>
<gene>
    <name evidence="1" type="primary">thiI</name>
    <name type="ordered locus">spyM18_0879</name>
</gene>
<keyword id="KW-0067">ATP-binding</keyword>
<keyword id="KW-0963">Cytoplasm</keyword>
<keyword id="KW-0547">Nucleotide-binding</keyword>
<keyword id="KW-0694">RNA-binding</keyword>
<keyword id="KW-0784">Thiamine biosynthesis</keyword>
<keyword id="KW-0808">Transferase</keyword>
<keyword id="KW-0820">tRNA-binding</keyword>
<reference key="1">
    <citation type="journal article" date="2002" name="Proc. Natl. Acad. Sci. U.S.A.">
        <title>Genome sequence and comparative microarray analysis of serotype M18 group A Streptococcus strains associated with acute rheumatic fever outbreaks.</title>
        <authorList>
            <person name="Smoot J.C."/>
            <person name="Barbian K.D."/>
            <person name="Van Gompel J.J."/>
            <person name="Smoot L.M."/>
            <person name="Chaussee M.S."/>
            <person name="Sylva G.L."/>
            <person name="Sturdevant D.E."/>
            <person name="Ricklefs S.M."/>
            <person name="Porcella S.F."/>
            <person name="Parkins L.D."/>
            <person name="Beres S.B."/>
            <person name="Campbell D.S."/>
            <person name="Smith T.M."/>
            <person name="Zhang Q."/>
            <person name="Kapur V."/>
            <person name="Daly J.A."/>
            <person name="Veasy L.G."/>
            <person name="Musser J.M."/>
        </authorList>
    </citation>
    <scope>NUCLEOTIDE SEQUENCE [LARGE SCALE GENOMIC DNA]</scope>
    <source>
        <strain>MGAS8232</strain>
    </source>
</reference>
<name>THII_STRP8</name>
<dbReference type="EC" id="2.8.1.4" evidence="1"/>
<dbReference type="EMBL" id="AE009949">
    <property type="protein sequence ID" value="AAL97532.1"/>
    <property type="molecule type" value="Genomic_DNA"/>
</dbReference>
<dbReference type="RefSeq" id="WP_002985121.1">
    <property type="nucleotide sequence ID" value="NC_003485.1"/>
</dbReference>
<dbReference type="SMR" id="Q8P1G9"/>
<dbReference type="KEGG" id="spm:spyM18_0879"/>
<dbReference type="HOGENOM" id="CLU_037952_4_0_9"/>
<dbReference type="UniPathway" id="UPA00060"/>
<dbReference type="GO" id="GO:0005829">
    <property type="term" value="C:cytosol"/>
    <property type="evidence" value="ECO:0007669"/>
    <property type="project" value="TreeGrafter"/>
</dbReference>
<dbReference type="GO" id="GO:0005524">
    <property type="term" value="F:ATP binding"/>
    <property type="evidence" value="ECO:0007669"/>
    <property type="project" value="UniProtKB-UniRule"/>
</dbReference>
<dbReference type="GO" id="GO:0004810">
    <property type="term" value="F:CCA tRNA nucleotidyltransferase activity"/>
    <property type="evidence" value="ECO:0007669"/>
    <property type="project" value="InterPro"/>
</dbReference>
<dbReference type="GO" id="GO:0000049">
    <property type="term" value="F:tRNA binding"/>
    <property type="evidence" value="ECO:0007669"/>
    <property type="project" value="UniProtKB-UniRule"/>
</dbReference>
<dbReference type="GO" id="GO:0140741">
    <property type="term" value="F:tRNA-uracil-4 sulfurtransferase activity"/>
    <property type="evidence" value="ECO:0007669"/>
    <property type="project" value="UniProtKB-EC"/>
</dbReference>
<dbReference type="GO" id="GO:0009228">
    <property type="term" value="P:thiamine biosynthetic process"/>
    <property type="evidence" value="ECO:0007669"/>
    <property type="project" value="UniProtKB-KW"/>
</dbReference>
<dbReference type="GO" id="GO:0009229">
    <property type="term" value="P:thiamine diphosphate biosynthetic process"/>
    <property type="evidence" value="ECO:0007669"/>
    <property type="project" value="UniProtKB-UniRule"/>
</dbReference>
<dbReference type="GO" id="GO:0052837">
    <property type="term" value="P:thiazole biosynthetic process"/>
    <property type="evidence" value="ECO:0007669"/>
    <property type="project" value="TreeGrafter"/>
</dbReference>
<dbReference type="GO" id="GO:0002937">
    <property type="term" value="P:tRNA 4-thiouridine biosynthesis"/>
    <property type="evidence" value="ECO:0007669"/>
    <property type="project" value="TreeGrafter"/>
</dbReference>
<dbReference type="CDD" id="cd01712">
    <property type="entry name" value="PPase_ThiI"/>
    <property type="match status" value="1"/>
</dbReference>
<dbReference type="CDD" id="cd11716">
    <property type="entry name" value="THUMP_ThiI"/>
    <property type="match status" value="1"/>
</dbReference>
<dbReference type="FunFam" id="3.40.50.620:FF:000053">
    <property type="entry name" value="Probable tRNA sulfurtransferase"/>
    <property type="match status" value="1"/>
</dbReference>
<dbReference type="Gene3D" id="3.30.2130.30">
    <property type="match status" value="1"/>
</dbReference>
<dbReference type="Gene3D" id="3.40.50.620">
    <property type="entry name" value="HUPs"/>
    <property type="match status" value="1"/>
</dbReference>
<dbReference type="HAMAP" id="MF_00021">
    <property type="entry name" value="ThiI"/>
    <property type="match status" value="1"/>
</dbReference>
<dbReference type="InterPro" id="IPR014729">
    <property type="entry name" value="Rossmann-like_a/b/a_fold"/>
</dbReference>
<dbReference type="InterPro" id="IPR020536">
    <property type="entry name" value="ThiI_AANH"/>
</dbReference>
<dbReference type="InterPro" id="IPR054173">
    <property type="entry name" value="ThiI_fer"/>
</dbReference>
<dbReference type="InterPro" id="IPR049961">
    <property type="entry name" value="ThiI_N"/>
</dbReference>
<dbReference type="InterPro" id="IPR004114">
    <property type="entry name" value="THUMP_dom"/>
</dbReference>
<dbReference type="InterPro" id="IPR049962">
    <property type="entry name" value="THUMP_ThiI"/>
</dbReference>
<dbReference type="InterPro" id="IPR003720">
    <property type="entry name" value="tRNA_STrfase"/>
</dbReference>
<dbReference type="InterPro" id="IPR050102">
    <property type="entry name" value="tRNA_sulfurtransferase_ThiI"/>
</dbReference>
<dbReference type="NCBIfam" id="TIGR00342">
    <property type="entry name" value="tRNA uracil 4-sulfurtransferase ThiI"/>
    <property type="match status" value="1"/>
</dbReference>
<dbReference type="PANTHER" id="PTHR43209">
    <property type="entry name" value="TRNA SULFURTRANSFERASE"/>
    <property type="match status" value="1"/>
</dbReference>
<dbReference type="PANTHER" id="PTHR43209:SF1">
    <property type="entry name" value="TRNA SULFURTRANSFERASE"/>
    <property type="match status" value="1"/>
</dbReference>
<dbReference type="Pfam" id="PF02568">
    <property type="entry name" value="ThiI"/>
    <property type="match status" value="1"/>
</dbReference>
<dbReference type="Pfam" id="PF22025">
    <property type="entry name" value="ThiI_fer"/>
    <property type="match status" value="1"/>
</dbReference>
<dbReference type="Pfam" id="PF02926">
    <property type="entry name" value="THUMP"/>
    <property type="match status" value="1"/>
</dbReference>
<dbReference type="SMART" id="SM00981">
    <property type="entry name" value="THUMP"/>
    <property type="match status" value="1"/>
</dbReference>
<dbReference type="SUPFAM" id="SSF52402">
    <property type="entry name" value="Adenine nucleotide alpha hydrolases-like"/>
    <property type="match status" value="1"/>
</dbReference>
<dbReference type="SUPFAM" id="SSF143437">
    <property type="entry name" value="THUMP domain-like"/>
    <property type="match status" value="1"/>
</dbReference>
<dbReference type="PROSITE" id="PS51165">
    <property type="entry name" value="THUMP"/>
    <property type="match status" value="1"/>
</dbReference>
<protein>
    <recommendedName>
        <fullName evidence="1">Probable tRNA sulfurtransferase</fullName>
        <ecNumber evidence="1">2.8.1.4</ecNumber>
    </recommendedName>
    <alternativeName>
        <fullName evidence="1">Sulfur carrier protein ThiS sulfurtransferase</fullName>
    </alternativeName>
    <alternativeName>
        <fullName evidence="1">Thiamine biosynthesis protein ThiI</fullName>
    </alternativeName>
    <alternativeName>
        <fullName evidence="1">tRNA 4-thiouridine synthase</fullName>
    </alternativeName>
</protein>
<accession>Q8P1G9</accession>